<sequence length="475" mass="53458">MSYRTRFGKDNSACDSGNAVEGSGSSKGPNEVSNDFDHEIAQLTKHRSRPHQLLSQDMPGKSRLLVSTMKMLVGRESNHSGRGRFSSADGCHVLSRYLPINGPWGVDQSTSPAYVSQFSNDGLFFVAGFQGGHIRIYNVDKGWKVQKDILTKSLRWTITDTSLSPDQRYLVYASMTPIVNIVNVGSSMTESLANVTEIHEGLDFSVGGDEDEFGIFSVRFSTDGRELVAASRDASIYVYDLQANKVNLRIPAHSSDVNTVCFADETGHLIYSGSDDNLCKVWDRRCFNHKGQPAGVLMGHLEGVTFIDSRGDGRYFISNGKDQTTQLWDIRKMSSRAMYSPRLRDHDWDYRWMEYPAHAKTLKHPNDQSLATYRGHGVLRTLIRCYLSPAYSTGQKYIYTGSSDHCVYIYDLVTGAQVARLNHHEGPVRDCSWHPLYPMLVSSSWDGTIARWEFPGDDQVPTLERPRARRKERLL</sequence>
<feature type="chain" id="PRO_0000051056" description="LEC14B homolog">
    <location>
        <begin position="1"/>
        <end position="475"/>
    </location>
</feature>
<feature type="repeat" description="WD 1">
    <location>
        <begin position="211"/>
        <end position="240"/>
    </location>
</feature>
<feature type="repeat" description="WD 2">
    <location>
        <begin position="252"/>
        <end position="283"/>
    </location>
</feature>
<feature type="repeat" description="WD 3">
    <location>
        <begin position="299"/>
        <end position="329"/>
    </location>
</feature>
<feature type="repeat" description="WD 4">
    <location>
        <begin position="375"/>
        <end position="411"/>
    </location>
</feature>
<feature type="repeat" description="WD 5">
    <location>
        <begin position="423"/>
        <end position="453"/>
    </location>
</feature>
<feature type="region of interest" description="Disordered" evidence="1">
    <location>
        <begin position="1"/>
        <end position="34"/>
    </location>
</feature>
<feature type="compositionally biased region" description="Polar residues" evidence="1">
    <location>
        <begin position="23"/>
        <end position="33"/>
    </location>
</feature>
<name>LE14B_PRUAR</name>
<organism>
    <name type="scientific">Prunus armeniaca</name>
    <name type="common">Apricot</name>
    <name type="synonym">Armeniaca vulgaris</name>
    <dbReference type="NCBI Taxonomy" id="36596"/>
    <lineage>
        <taxon>Eukaryota</taxon>
        <taxon>Viridiplantae</taxon>
        <taxon>Streptophyta</taxon>
        <taxon>Embryophyta</taxon>
        <taxon>Tracheophyta</taxon>
        <taxon>Spermatophyta</taxon>
        <taxon>Magnoliopsida</taxon>
        <taxon>eudicotyledons</taxon>
        <taxon>Gunneridae</taxon>
        <taxon>Pentapetalae</taxon>
        <taxon>rosids</taxon>
        <taxon>fabids</taxon>
        <taxon>Rosales</taxon>
        <taxon>Rosaceae</taxon>
        <taxon>Amygdaloideae</taxon>
        <taxon>Amygdaleae</taxon>
        <taxon>Prunus</taxon>
    </lineage>
</organism>
<protein>
    <recommendedName>
        <fullName>LEC14B homolog</fullName>
    </recommendedName>
</protein>
<keyword id="KW-0677">Repeat</keyword>
<keyword id="KW-0853">WD repeat</keyword>
<accession>O24467</accession>
<reference key="1">
    <citation type="online journal article" date="1997" name="Plant Gene Register">
        <title>Molecular cloning and nucleotide sequence of a protein from apricot fruit homologous to LEC14B protein isolated from Lithospermum. Gene expression during fruit ripening.</title>
        <authorList>
            <person name="Mbeguie-A-Mbeguie D."/>
            <person name="Gomez R.-M."/>
            <person name="Fils-Lycaon B.R."/>
        </authorList>
        <locator>PGR97-161</locator>
    </citation>
    <scope>NUCLEOTIDE SEQUENCE [MRNA]</scope>
    <source>
        <strain>cv. Bergeron</strain>
        <tissue>Fruit</tissue>
    </source>
</reference>
<dbReference type="EMBL" id="U82760">
    <property type="protein sequence ID" value="AAB88274.1"/>
    <property type="molecule type" value="mRNA"/>
</dbReference>
<dbReference type="SMR" id="O24467"/>
<dbReference type="GO" id="GO:0080008">
    <property type="term" value="C:Cul4-RING E3 ubiquitin ligase complex"/>
    <property type="evidence" value="ECO:0007669"/>
    <property type="project" value="TreeGrafter"/>
</dbReference>
<dbReference type="GO" id="GO:0043161">
    <property type="term" value="P:proteasome-mediated ubiquitin-dependent protein catabolic process"/>
    <property type="evidence" value="ECO:0007669"/>
    <property type="project" value="TreeGrafter"/>
</dbReference>
<dbReference type="FunFam" id="2.130.10.10:FF:000492">
    <property type="entry name" value="LEC14B homolog isoform X2"/>
    <property type="match status" value="1"/>
</dbReference>
<dbReference type="FunFam" id="2.130.10.10:FF:000557">
    <property type="entry name" value="WD repeat protein"/>
    <property type="match status" value="1"/>
</dbReference>
<dbReference type="Gene3D" id="2.130.10.10">
    <property type="entry name" value="YVTN repeat-like/Quinoprotein amine dehydrogenase"/>
    <property type="match status" value="3"/>
</dbReference>
<dbReference type="InterPro" id="IPR051859">
    <property type="entry name" value="DCAF"/>
</dbReference>
<dbReference type="InterPro" id="IPR017399">
    <property type="entry name" value="DCAF11/LEC14B"/>
</dbReference>
<dbReference type="InterPro" id="IPR015943">
    <property type="entry name" value="WD40/YVTN_repeat-like_dom_sf"/>
</dbReference>
<dbReference type="InterPro" id="IPR036322">
    <property type="entry name" value="WD40_repeat_dom_sf"/>
</dbReference>
<dbReference type="InterPro" id="IPR001680">
    <property type="entry name" value="WD40_rpt"/>
</dbReference>
<dbReference type="PANTHER" id="PTHR19847">
    <property type="entry name" value="DDB1- AND CUL4-ASSOCIATED FACTOR 11"/>
    <property type="match status" value="1"/>
</dbReference>
<dbReference type="PANTHER" id="PTHR19847:SF7">
    <property type="entry name" value="DDB1- AND CUL4-ASSOCIATED FACTOR 11"/>
    <property type="match status" value="1"/>
</dbReference>
<dbReference type="Pfam" id="PF00400">
    <property type="entry name" value="WD40"/>
    <property type="match status" value="5"/>
</dbReference>
<dbReference type="PIRSF" id="PIRSF038135">
    <property type="entry name" value="WD_repeat_p23"/>
    <property type="match status" value="1"/>
</dbReference>
<dbReference type="SMART" id="SM00320">
    <property type="entry name" value="WD40"/>
    <property type="match status" value="6"/>
</dbReference>
<dbReference type="SUPFAM" id="SSF50978">
    <property type="entry name" value="WD40 repeat-like"/>
    <property type="match status" value="1"/>
</dbReference>
<dbReference type="PROSITE" id="PS50082">
    <property type="entry name" value="WD_REPEATS_2"/>
    <property type="match status" value="4"/>
</dbReference>
<dbReference type="PROSITE" id="PS50294">
    <property type="entry name" value="WD_REPEATS_REGION"/>
    <property type="match status" value="1"/>
</dbReference>
<comment type="similarity">
    <text evidence="2">Belongs to the WD repeat LEC14B family.</text>
</comment>
<evidence type="ECO:0000256" key="1">
    <source>
        <dbReference type="SAM" id="MobiDB-lite"/>
    </source>
</evidence>
<evidence type="ECO:0000305" key="2"/>
<proteinExistence type="evidence at transcript level"/>